<dbReference type="EC" id="2.3.2.13"/>
<dbReference type="EMBL" id="AF531437">
    <property type="protein sequence ID" value="AAM95951.1"/>
    <property type="molecule type" value="Genomic_DNA"/>
</dbReference>
<dbReference type="EMBL" id="HF968462">
    <property type="protein sequence ID" value="CCW72544.1"/>
    <property type="molecule type" value="Genomic_DNA"/>
</dbReference>
<dbReference type="EMBL" id="Y18315">
    <property type="protein sequence ID" value="CAA77128.1"/>
    <property type="molecule type" value="Genomic_DNA"/>
</dbReference>
<dbReference type="RefSeq" id="WP_040890501.1">
    <property type="nucleotide sequence ID" value="NZ_JBFADJ010000007.1"/>
</dbReference>
<dbReference type="PDB" id="1IU4">
    <property type="method" value="X-ray"/>
    <property type="resolution" value="2.40 A"/>
    <property type="chains" value="A/B/C/D=77-407"/>
</dbReference>
<dbReference type="PDB" id="3IU0">
    <property type="method" value="X-ray"/>
    <property type="resolution" value="1.90 A"/>
    <property type="chains" value="A=32-407"/>
</dbReference>
<dbReference type="PDB" id="9IHS">
    <property type="method" value="X-ray"/>
    <property type="resolution" value="2.00 A"/>
    <property type="chains" value="A/B/C/D=77-407"/>
</dbReference>
<dbReference type="PDBsum" id="1IU4"/>
<dbReference type="PDBsum" id="3IU0"/>
<dbReference type="PDBsum" id="9IHS"/>
<dbReference type="SMR" id="P81453"/>
<dbReference type="Allergome" id="11851">
    <property type="allergen name" value="Str mo TrGlu"/>
</dbReference>
<dbReference type="BRENDA" id="2.3.2.13">
    <property type="organism ID" value="6129"/>
</dbReference>
<dbReference type="EvolutionaryTrace" id="P81453"/>
<dbReference type="GO" id="GO:0003810">
    <property type="term" value="F:protein-glutamine gamma-glutamyltransferase activity"/>
    <property type="evidence" value="ECO:0007669"/>
    <property type="project" value="UniProtKB-EC"/>
</dbReference>
<dbReference type="Gene3D" id="3.90.1360.10">
    <property type="entry name" value="Protein-glutamine gamma-glutamyltransferase"/>
    <property type="match status" value="1"/>
</dbReference>
<dbReference type="InterPro" id="IPR038765">
    <property type="entry name" value="Papain-like_cys_pep_sf"/>
</dbReference>
<dbReference type="InterPro" id="IPR015107">
    <property type="entry name" value="Transglut_prok"/>
</dbReference>
<dbReference type="InterPro" id="IPR037084">
    <property type="entry name" value="Transglut_prok_sf"/>
</dbReference>
<dbReference type="Pfam" id="PF09017">
    <property type="entry name" value="Transglut_prok"/>
    <property type="match status" value="1"/>
</dbReference>
<dbReference type="PIRSF" id="PIRSF037210">
    <property type="entry name" value="Transglut_prok"/>
    <property type="match status" value="1"/>
</dbReference>
<dbReference type="SUPFAM" id="SSF54001">
    <property type="entry name" value="Cysteine proteinases"/>
    <property type="match status" value="1"/>
</dbReference>
<accession>P81453</accession>
<accession>N1NTU7</accession>
<accession>Q8KRJ2</accession>
<accession>Q9ZAF5</accession>
<sequence length="407" mass="45684">MRIRRRALVFATMSAVLCTAGFMPSAGEAAADNGAGEETKSYAETYRLTADDVANINALNESAPAASSAGPSFRAPDSDDRVTPPAEPLDRMPDPYRPSYGRAETVVNNYIRKWQQVYSHRDGRKQQMTEEQREWLSYGCVGVTWVNSGQYPTNRLAFASFDEDRFKNELKNGRPRSGETRAEFEGRVAKESFDEEKGFQRAREVASVMNRALENAHDESAYLDNLKKELANGNDALRNEDARSPFYSALRNTPSFKERNGGNHDPSRMKAVIYSKHFWSGQDRSSSADKRKYGDPDAFRPAPGTGLVDMSRDRNIPRSPTSPGEGFVNFDYGWFGAQTEADADKTVWTHGNHYHAPNGSLGAMHVYESKFRNWSEGYSDFDRGAYVITFIPKSWNTAPDKVKQGWP</sequence>
<proteinExistence type="evidence at protein level"/>
<name>TGAS_STRMB</name>
<protein>
    <recommendedName>
        <fullName>Protein-glutamine gamma-glutamyltransferase</fullName>
        <ecNumber>2.3.2.13</ecNumber>
    </recommendedName>
    <alternativeName>
        <fullName>MTG</fullName>
    </alternativeName>
    <alternativeName>
        <fullName>Transglutaminase</fullName>
        <shortName>TGase</shortName>
    </alternativeName>
</protein>
<organism>
    <name type="scientific">Streptomyces mobaraensis</name>
    <name type="common">Streptoverticillium mobaraense</name>
    <dbReference type="NCBI Taxonomy" id="35621"/>
    <lineage>
        <taxon>Bacteria</taxon>
        <taxon>Bacillati</taxon>
        <taxon>Actinomycetota</taxon>
        <taxon>Actinomycetes</taxon>
        <taxon>Kitasatosporales</taxon>
        <taxon>Streptomycetaceae</taxon>
        <taxon>Streptomyces</taxon>
    </lineage>
</organism>
<evidence type="ECO:0000255" key="1"/>
<evidence type="ECO:0000256" key="2">
    <source>
        <dbReference type="SAM" id="MobiDB-lite"/>
    </source>
</evidence>
<evidence type="ECO:0000269" key="3">
    <source>
    </source>
</evidence>
<evidence type="ECO:0000305" key="4"/>
<evidence type="ECO:0007829" key="5">
    <source>
        <dbReference type="PDB" id="1IU4"/>
    </source>
</evidence>
<evidence type="ECO:0007829" key="6">
    <source>
        <dbReference type="PDB" id="3IU0"/>
    </source>
</evidence>
<evidence type="ECO:0007829" key="7">
    <source>
        <dbReference type="PDB" id="9IHS"/>
    </source>
</evidence>
<feature type="signal peptide" evidence="1">
    <location>
        <begin position="1"/>
        <end position="31"/>
    </location>
</feature>
<feature type="propeptide" id="PRO_0000033656" evidence="3">
    <location>
        <begin position="32"/>
        <end position="76"/>
    </location>
</feature>
<feature type="chain" id="PRO_0000033657" description="Protein-glutamine gamma-glutamyltransferase">
    <location>
        <begin position="77"/>
        <end position="407"/>
    </location>
</feature>
<feature type="region of interest" description="Disordered" evidence="2">
    <location>
        <begin position="62"/>
        <end position="98"/>
    </location>
</feature>
<feature type="region of interest" description="Disordered" evidence="2">
    <location>
        <begin position="282"/>
        <end position="322"/>
    </location>
</feature>
<feature type="compositionally biased region" description="Low complexity" evidence="2">
    <location>
        <begin position="62"/>
        <end position="72"/>
    </location>
</feature>
<feature type="compositionally biased region" description="Basic and acidic residues" evidence="2">
    <location>
        <begin position="76"/>
        <end position="94"/>
    </location>
</feature>
<feature type="compositionally biased region" description="Basic and acidic residues" evidence="2">
    <location>
        <begin position="286"/>
        <end position="298"/>
    </location>
</feature>
<feature type="active site">
    <location>
        <position position="140"/>
    </location>
</feature>
<feature type="active site">
    <location>
        <position position="331"/>
    </location>
</feature>
<feature type="active site">
    <location>
        <position position="350"/>
    </location>
</feature>
<feature type="helix" evidence="6">
    <location>
        <begin position="42"/>
        <end position="46"/>
    </location>
</feature>
<feature type="helix" evidence="6">
    <location>
        <begin position="50"/>
        <end position="61"/>
    </location>
</feature>
<feature type="strand" evidence="6">
    <location>
        <begin position="102"/>
        <end position="106"/>
    </location>
</feature>
<feature type="helix" evidence="6">
    <location>
        <begin position="107"/>
        <end position="116"/>
    </location>
</feature>
<feature type="turn" evidence="6">
    <location>
        <begin position="117"/>
        <end position="119"/>
    </location>
</feature>
<feature type="helix" evidence="6">
    <location>
        <begin position="130"/>
        <end position="136"/>
    </location>
</feature>
<feature type="helix" evidence="6">
    <location>
        <begin position="142"/>
        <end position="148"/>
    </location>
</feature>
<feature type="strand" evidence="6">
    <location>
        <begin position="156"/>
        <end position="158"/>
    </location>
</feature>
<feature type="helix" evidence="6">
    <location>
        <begin position="163"/>
        <end position="172"/>
    </location>
</feature>
<feature type="helix" evidence="6">
    <location>
        <begin position="181"/>
        <end position="191"/>
    </location>
</feature>
<feature type="helix" evidence="6">
    <location>
        <begin position="195"/>
        <end position="213"/>
    </location>
</feature>
<feature type="helix" evidence="6">
    <location>
        <begin position="219"/>
        <end position="232"/>
    </location>
</feature>
<feature type="helix" evidence="6">
    <location>
        <begin position="236"/>
        <end position="239"/>
    </location>
</feature>
<feature type="strand" evidence="5">
    <location>
        <begin position="242"/>
        <end position="244"/>
    </location>
</feature>
<feature type="helix" evidence="6">
    <location>
        <begin position="245"/>
        <end position="248"/>
    </location>
</feature>
<feature type="turn" evidence="6">
    <location>
        <begin position="249"/>
        <end position="252"/>
    </location>
</feature>
<feature type="helix" evidence="6">
    <location>
        <begin position="254"/>
        <end position="257"/>
    </location>
</feature>
<feature type="turn" evidence="6">
    <location>
        <begin position="259"/>
        <end position="264"/>
    </location>
</feature>
<feature type="helix" evidence="6">
    <location>
        <begin position="266"/>
        <end position="268"/>
    </location>
</feature>
<feature type="strand" evidence="6">
    <location>
        <begin position="269"/>
        <end position="278"/>
    </location>
</feature>
<feature type="helix" evidence="6">
    <location>
        <begin position="288"/>
        <end position="293"/>
    </location>
</feature>
<feature type="turn" evidence="5">
    <location>
        <begin position="296"/>
        <end position="299"/>
    </location>
</feature>
<feature type="turn" evidence="6">
    <location>
        <begin position="303"/>
        <end position="305"/>
    </location>
</feature>
<feature type="helix" evidence="7">
    <location>
        <begin position="310"/>
        <end position="312"/>
    </location>
</feature>
<feature type="strand" evidence="5">
    <location>
        <begin position="321"/>
        <end position="324"/>
    </location>
</feature>
<feature type="strand" evidence="6">
    <location>
        <begin position="331"/>
        <end position="336"/>
    </location>
</feature>
<feature type="helix" evidence="6">
    <location>
        <begin position="343"/>
        <end position="345"/>
    </location>
</feature>
<feature type="strand" evidence="6">
    <location>
        <begin position="347"/>
        <end position="353"/>
    </location>
</feature>
<feature type="strand" evidence="6">
    <location>
        <begin position="359"/>
        <end position="363"/>
    </location>
</feature>
<feature type="strand" evidence="6">
    <location>
        <begin position="365"/>
        <end position="370"/>
    </location>
</feature>
<feature type="helix" evidence="6">
    <location>
        <begin position="371"/>
        <end position="375"/>
    </location>
</feature>
<feature type="strand" evidence="6">
    <location>
        <begin position="382"/>
        <end position="392"/>
    </location>
</feature>
<feature type="strand" evidence="6">
    <location>
        <begin position="404"/>
        <end position="406"/>
    </location>
</feature>
<reference key="1">
    <citation type="journal article" date="2003" name="Appl. Environ. Microbiol.">
        <title>Secretion of active-form Streptoverticillium mobaraense transglutaminase by Corynebacterium glutamicum: processing of the pro-transglutaminase by a cosecreted subtilisin-like protease from Streptomyces albogriseolus.</title>
        <authorList>
            <person name="Kikuchi Y."/>
            <person name="Date M."/>
            <person name="Yokoyama K."/>
            <person name="Umezawa Y."/>
            <person name="Matsui H."/>
        </authorList>
    </citation>
    <scope>NUCLEOTIDE SEQUENCE [GENOMIC DNA]</scope>
    <source>
        <strain>ATCC 29032 / CBS 199.75 / DSM 40847 / NBRC 13819 / NCIMB 11159 / NRRL B-3729 / VKM Ac-928</strain>
    </source>
</reference>
<reference key="2">
    <citation type="submission" date="2013-04" db="EMBL/GenBank/DDBJ databases">
        <title>Confirmation of the genes coding a transglutaminase and a prolyl tri/tetrapeptidyl aminopeptidase from Streptomyces mobaraensis.</title>
        <authorList>
            <person name="Zindel S."/>
            <person name="Froels S."/>
            <person name="Kletzin A."/>
            <person name="Pfeifer F."/>
            <person name="Fuchsbauer H.L."/>
        </authorList>
    </citation>
    <scope>NUCLEOTIDE SEQUENCE [GENOMIC DNA]</scope>
    <source>
        <strain>ATCC 29032 / CBS 199.75 / DSM 40847 / NBRC 13819 / NCIMB 11159 / NRRL B-3729 / VKM Ac-928</strain>
    </source>
</reference>
<reference key="3">
    <citation type="journal article" date="1998" name="Eur. J. Biochem.">
        <title>Bacterial pro-transglutaminase from Streptoverticillium mobaraense: purification, characterisation and sequence of the zymogen.</title>
        <authorList>
            <person name="Pasternack R."/>
            <person name="Dorsch S."/>
            <person name="Otterbach J.T."/>
            <person name="Robenek I.R."/>
            <person name="Wolf S."/>
            <person name="Fuchsbauer H.-L."/>
        </authorList>
    </citation>
    <scope>NUCLEOTIDE SEQUENCE [GENOMIC DNA] OF 32-407</scope>
    <scope>PARTIAL PROTEIN SEQUENCE</scope>
    <source>
        <strain>ATCC 27441 / CBS 777.72 / DSM 40587 / JCM 4778 / NBRC 13476 / VKM Ac-879</strain>
    </source>
</reference>
<reference key="4">
    <citation type="journal article" date="1993" name="J. Biol. Chem.">
        <title>Primary structure of microbial transglutaminase from Streptoverticillium sp. strain s-8112.</title>
        <authorList>
            <person name="Kanaji T."/>
            <person name="Ozaki H."/>
            <person name="Takao T."/>
            <person name="Kawajiri H."/>
            <person name="Ide H."/>
            <person name="Motoki M."/>
            <person name="Shimonishi Y."/>
        </authorList>
    </citation>
    <scope>PROTEIN SEQUENCE OF 77-407</scope>
    <scope>MASS SPECTROMETRY</scope>
    <source>
        <strain>S-8112</strain>
    </source>
</reference>
<reference key="5">
    <citation type="journal article" date="2002" name="J. Biol. Chem.">
        <title>Crystal structure of microbial transglutaminase from Streptoverticillium mobaraense.</title>
        <authorList>
            <person name="Kashiwagi T."/>
            <person name="Yokoyama K."/>
            <person name="Ishikawa K."/>
            <person name="Ono K."/>
            <person name="Ejima D."/>
            <person name="Matsui H."/>
            <person name="Suzuki E."/>
        </authorList>
    </citation>
    <scope>X-RAY CRYSTALLOGRAPHY (2.4 ANGSTROMS) OF 77-407</scope>
    <source>
        <strain>ATCC 29032 / CBS 199.75 / DSM 40847 / NBRC 13819 / NCIMB 11159 / NRRL B-3729 / VKM Ac-928</strain>
    </source>
</reference>
<comment type="function">
    <text>Catalyzes the cross-linking of proteins and the conjugation of polyamines to proteins.</text>
</comment>
<comment type="catalytic activity">
    <reaction>
        <text>L-glutaminyl-[protein] + L-lysyl-[protein] = [protein]-L-lysyl-N(6)-5-L-glutamyl-[protein] + NH4(+)</text>
        <dbReference type="Rhea" id="RHEA:54816"/>
        <dbReference type="Rhea" id="RHEA-COMP:9752"/>
        <dbReference type="Rhea" id="RHEA-COMP:10207"/>
        <dbReference type="Rhea" id="RHEA-COMP:14005"/>
        <dbReference type="ChEBI" id="CHEBI:28938"/>
        <dbReference type="ChEBI" id="CHEBI:29969"/>
        <dbReference type="ChEBI" id="CHEBI:30011"/>
        <dbReference type="ChEBI" id="CHEBI:138370"/>
        <dbReference type="EC" id="2.3.2.13"/>
    </reaction>
</comment>
<comment type="mass spectrometry" mass="37869.2" error="8.8" method="Electrospray" evidence="3"/>
<comment type="biotechnology">
    <text>Sold under the name Activa TG by Ajinomoto. It has the ability to cross-link protein molecules present in food without the use of salt or binders. Used to improve some of the physical properties such as firmness, elasticity and moisture retention of food such as meat, poultry and seafood.</text>
</comment>
<comment type="similarity">
    <text evidence="4">Belongs to the bacterial TGase family.</text>
</comment>
<keyword id="KW-0002">3D-structure</keyword>
<keyword id="KW-0012">Acyltransferase</keyword>
<keyword id="KW-0903">Direct protein sequencing</keyword>
<keyword id="KW-0732">Signal</keyword>
<keyword id="KW-0808">Transferase</keyword>
<keyword id="KW-0865">Zymogen</keyword>